<protein>
    <recommendedName>
        <fullName evidence="4">Electron transfer flavoprotein subunit beta</fullName>
        <shortName evidence="1">Beta-ETF</shortName>
    </recommendedName>
</protein>
<keyword id="KW-0007">Acetylation</keyword>
<keyword id="KW-0249">Electron transport</keyword>
<keyword id="KW-0488">Methylation</keyword>
<keyword id="KW-0496">Mitochondrion</keyword>
<keyword id="KW-0547">Nucleotide-binding</keyword>
<keyword id="KW-0597">Phosphoprotein</keyword>
<keyword id="KW-1185">Reference proteome</keyword>
<keyword id="KW-0813">Transport</keyword>
<dbReference type="EMBL" id="CR857156">
    <property type="protein sequence ID" value="CAH89457.1"/>
    <property type="molecule type" value="mRNA"/>
</dbReference>
<dbReference type="RefSeq" id="NP_001124625.1">
    <property type="nucleotide sequence ID" value="NM_001131153.2"/>
</dbReference>
<dbReference type="SMR" id="Q5RFK0"/>
<dbReference type="FunCoup" id="Q5RFK0">
    <property type="interactions" value="1473"/>
</dbReference>
<dbReference type="STRING" id="9601.ENSPPYP00000011553"/>
<dbReference type="GeneID" id="100171463"/>
<dbReference type="KEGG" id="pon:100171463"/>
<dbReference type="CTD" id="2109"/>
<dbReference type="eggNOG" id="KOG3180">
    <property type="taxonomic scope" value="Eukaryota"/>
</dbReference>
<dbReference type="HOGENOM" id="CLU_060196_0_0_1"/>
<dbReference type="InParanoid" id="Q5RFK0"/>
<dbReference type="OrthoDB" id="276685at2759"/>
<dbReference type="TreeFam" id="TF314039"/>
<dbReference type="Proteomes" id="UP000001595">
    <property type="component" value="Chromosome 19"/>
</dbReference>
<dbReference type="GO" id="GO:0005759">
    <property type="term" value="C:mitochondrial matrix"/>
    <property type="evidence" value="ECO:0000250"/>
    <property type="project" value="UniProtKB"/>
</dbReference>
<dbReference type="GO" id="GO:0009055">
    <property type="term" value="F:electron transfer activity"/>
    <property type="evidence" value="ECO:0000250"/>
    <property type="project" value="UniProtKB"/>
</dbReference>
<dbReference type="GO" id="GO:0000166">
    <property type="term" value="F:nucleotide binding"/>
    <property type="evidence" value="ECO:0007669"/>
    <property type="project" value="UniProtKB-KW"/>
</dbReference>
<dbReference type="GO" id="GO:0009063">
    <property type="term" value="P:amino acid catabolic process"/>
    <property type="evidence" value="ECO:0007669"/>
    <property type="project" value="TreeGrafter"/>
</dbReference>
<dbReference type="GO" id="GO:0033539">
    <property type="term" value="P:fatty acid beta-oxidation using acyl-CoA dehydrogenase"/>
    <property type="evidence" value="ECO:0000250"/>
    <property type="project" value="UniProtKB"/>
</dbReference>
<dbReference type="CDD" id="cd01714">
    <property type="entry name" value="ETF_beta"/>
    <property type="match status" value="1"/>
</dbReference>
<dbReference type="FunFam" id="3.40.50.620:FF:000011">
    <property type="entry name" value="Electron transfer flavoprotein subunit beta"/>
    <property type="match status" value="1"/>
</dbReference>
<dbReference type="Gene3D" id="3.40.50.620">
    <property type="entry name" value="HUPs"/>
    <property type="match status" value="1"/>
</dbReference>
<dbReference type="InterPro" id="IPR000049">
    <property type="entry name" value="ET-Flavoprotein_bsu_CS"/>
</dbReference>
<dbReference type="InterPro" id="IPR014730">
    <property type="entry name" value="ETF_a/b_N"/>
</dbReference>
<dbReference type="InterPro" id="IPR012255">
    <property type="entry name" value="ETF_b"/>
</dbReference>
<dbReference type="InterPro" id="IPR033948">
    <property type="entry name" value="ETF_beta_N"/>
</dbReference>
<dbReference type="InterPro" id="IPR014729">
    <property type="entry name" value="Rossmann-like_a/b/a_fold"/>
</dbReference>
<dbReference type="PANTHER" id="PTHR21294">
    <property type="entry name" value="ELECTRON TRANSFER FLAVOPROTEIN BETA-SUBUNIT"/>
    <property type="match status" value="1"/>
</dbReference>
<dbReference type="PANTHER" id="PTHR21294:SF8">
    <property type="entry name" value="ELECTRON TRANSFER FLAVOPROTEIN SUBUNIT BETA"/>
    <property type="match status" value="1"/>
</dbReference>
<dbReference type="Pfam" id="PF01012">
    <property type="entry name" value="ETF"/>
    <property type="match status" value="1"/>
</dbReference>
<dbReference type="PIRSF" id="PIRSF000090">
    <property type="entry name" value="Beta-ETF"/>
    <property type="match status" value="1"/>
</dbReference>
<dbReference type="SMART" id="SM00893">
    <property type="entry name" value="ETF"/>
    <property type="match status" value="1"/>
</dbReference>
<dbReference type="SUPFAM" id="SSF52402">
    <property type="entry name" value="Adenine nucleotide alpha hydrolases-like"/>
    <property type="match status" value="1"/>
</dbReference>
<dbReference type="PROSITE" id="PS01065">
    <property type="entry name" value="ETF_BETA"/>
    <property type="match status" value="1"/>
</dbReference>
<comment type="function">
    <text evidence="1">Heterodimeric electron transfer flavoprotein that accepts electrons from several mitochondrial dehydrogenases, including acyl-CoA dehydrogenases, glutaryl-CoA and sarcosine dehydrogenase. It transfers the electrons to the main mitochondrial respiratory chain via ETF-ubiquinone oxidoreductase. Required for normal mitochondrial fatty acid oxidation and normal amino acid metabolism. ETFB binds an AMP molecule that probably has a purely structural role.</text>
</comment>
<comment type="subunit">
    <text evidence="1">Heterodimer composed of ETFA and ETFB. Identified in a complex that contains ETFA, ETFB and ETFRF1. Interacts with ACADM.</text>
</comment>
<comment type="subcellular location">
    <subcellularLocation>
        <location evidence="1">Mitochondrion matrix</location>
    </subcellularLocation>
</comment>
<comment type="domain">
    <text evidence="1">The recognition loop recognizes a hydrophobic patch at the surface of interacting dehydrogenases and acts as a static anchor at the interface.</text>
</comment>
<comment type="PTM">
    <text evidence="1">Methylated. Trimethylation at Lys-200 and Lys-203 may negatively regulate the activity in electron transfer from acyl-CoA dehydrogenases.</text>
</comment>
<comment type="similarity">
    <text evidence="4">Belongs to the ETF beta-subunit/FixA family.</text>
</comment>
<accession>Q5RFK0</accession>
<feature type="initiator methionine" description="Removed" evidence="2">
    <location>
        <position position="1"/>
    </location>
</feature>
<feature type="chain" id="PRO_0000167872" description="Electron transfer flavoprotein subunit beta">
    <location>
        <begin position="2"/>
        <end position="255"/>
    </location>
</feature>
<feature type="region of interest" description="Recognition loop" evidence="1">
    <location>
        <begin position="183"/>
        <end position="205"/>
    </location>
</feature>
<feature type="binding site" evidence="1">
    <location>
        <position position="9"/>
    </location>
    <ligand>
        <name>AMP</name>
        <dbReference type="ChEBI" id="CHEBI:456215"/>
    </ligand>
</feature>
<feature type="binding site" evidence="1">
    <location>
        <begin position="39"/>
        <end position="42"/>
    </location>
    <ligand>
        <name>AMP</name>
        <dbReference type="ChEBI" id="CHEBI:456215"/>
    </ligand>
</feature>
<feature type="binding site" evidence="1">
    <location>
        <position position="66"/>
    </location>
    <ligand>
        <name>AMP</name>
        <dbReference type="ChEBI" id="CHEBI:456215"/>
    </ligand>
</feature>
<feature type="binding site" evidence="1">
    <location>
        <begin position="123"/>
        <end position="134"/>
    </location>
    <ligand>
        <name>AMP</name>
        <dbReference type="ChEBI" id="CHEBI:456215"/>
    </ligand>
</feature>
<feature type="modified residue" description="N-acetylalanine" evidence="2">
    <location>
        <position position="2"/>
    </location>
</feature>
<feature type="modified residue" description="N6,N6,N6-trimethyllysine; by ETFBKMT; alternate" evidence="2">
    <location>
        <position position="200"/>
    </location>
</feature>
<feature type="modified residue" description="N6-acetyllysine; alternate" evidence="3">
    <location>
        <position position="200"/>
    </location>
</feature>
<feature type="modified residue" description="N6-methyllysine; alternate" evidence="1">
    <location>
        <position position="200"/>
    </location>
</feature>
<feature type="modified residue" description="N6,N6,N6-trimethyllysine; by ETFBKMT" evidence="2">
    <location>
        <position position="203"/>
    </location>
</feature>
<feature type="modified residue" description="N6-acetyllysine; alternate" evidence="3">
    <location>
        <position position="210"/>
    </location>
</feature>
<feature type="modified residue" description="N6-succinyllysine; alternate" evidence="3">
    <location>
        <position position="210"/>
    </location>
</feature>
<feature type="modified residue" description="Phosphoserine" evidence="1">
    <location>
        <position position="223"/>
    </location>
</feature>
<feature type="modified residue" description="Phosphoserine" evidence="1">
    <location>
        <position position="226"/>
    </location>
</feature>
<feature type="modified residue" description="N6-acetyllysine" evidence="3">
    <location>
        <position position="238"/>
    </location>
</feature>
<feature type="modified residue" description="N6-acetyllysine; alternate" evidence="3">
    <location>
        <position position="248"/>
    </location>
</feature>
<feature type="modified residue" description="N6-succinyllysine; alternate" evidence="3">
    <location>
        <position position="248"/>
    </location>
</feature>
<proteinExistence type="evidence at transcript level"/>
<gene>
    <name evidence="1" type="primary">ETFB</name>
</gene>
<sequence>MAELRALVAVKRVIDYAVKIRVKPDRTGVVTDGVKHSMNPFCEIAVEEAVRLKEKKLVKEVIAVSCGPAQCQETIRTALAMGADRGIHVEVPPAEAERLGPLQVARVLAKLAEKEKVDLVLLGKQAIDDDCNQTGQMTAGFLDWPQGTFASQVTLEGDKLKVEREIDGGLETLRLKLPAVVTADLRLNEPRYATLPNIMKAKKKKIEVIKPGDLGVDLTSKLSVISVEDPPQRTAGVKVETTEDLVAKLKEIGRI</sequence>
<evidence type="ECO:0000250" key="1">
    <source>
        <dbReference type="UniProtKB" id="P38117"/>
    </source>
</evidence>
<evidence type="ECO:0000250" key="2">
    <source>
        <dbReference type="UniProtKB" id="Q2TBV3"/>
    </source>
</evidence>
<evidence type="ECO:0000250" key="3">
    <source>
        <dbReference type="UniProtKB" id="Q9DCW4"/>
    </source>
</evidence>
<evidence type="ECO:0000305" key="4"/>
<reference key="1">
    <citation type="submission" date="2004-11" db="EMBL/GenBank/DDBJ databases">
        <authorList>
            <consortium name="The German cDNA consortium"/>
        </authorList>
    </citation>
    <scope>NUCLEOTIDE SEQUENCE [LARGE SCALE MRNA]</scope>
    <source>
        <tissue>Kidney</tissue>
    </source>
</reference>
<organism>
    <name type="scientific">Pongo abelii</name>
    <name type="common">Sumatran orangutan</name>
    <name type="synonym">Pongo pygmaeus abelii</name>
    <dbReference type="NCBI Taxonomy" id="9601"/>
    <lineage>
        <taxon>Eukaryota</taxon>
        <taxon>Metazoa</taxon>
        <taxon>Chordata</taxon>
        <taxon>Craniata</taxon>
        <taxon>Vertebrata</taxon>
        <taxon>Euteleostomi</taxon>
        <taxon>Mammalia</taxon>
        <taxon>Eutheria</taxon>
        <taxon>Euarchontoglires</taxon>
        <taxon>Primates</taxon>
        <taxon>Haplorrhini</taxon>
        <taxon>Catarrhini</taxon>
        <taxon>Hominidae</taxon>
        <taxon>Pongo</taxon>
    </lineage>
</organism>
<name>ETFB_PONAB</name>